<reference key="1">
    <citation type="journal article" date="2005" name="J. Bacteriol.">
        <title>Swine and poultry pathogens: the complete genome sequences of two strains of Mycoplasma hyopneumoniae and a strain of Mycoplasma synoviae.</title>
        <authorList>
            <person name="Vasconcelos A.T.R."/>
            <person name="Ferreira H.B."/>
            <person name="Bizarro C.V."/>
            <person name="Bonatto S.L."/>
            <person name="Carvalho M.O."/>
            <person name="Pinto P.M."/>
            <person name="Almeida D.F."/>
            <person name="Almeida L.G.P."/>
            <person name="Almeida R."/>
            <person name="Alves-Junior L."/>
            <person name="Assuncao E.N."/>
            <person name="Azevedo V.A.C."/>
            <person name="Bogo M.R."/>
            <person name="Brigido M.M."/>
            <person name="Brocchi M."/>
            <person name="Burity H.A."/>
            <person name="Camargo A.A."/>
            <person name="Camargo S.S."/>
            <person name="Carepo M.S."/>
            <person name="Carraro D.M."/>
            <person name="de Mattos Cascardo J.C."/>
            <person name="Castro L.A."/>
            <person name="Cavalcanti G."/>
            <person name="Chemale G."/>
            <person name="Collevatti R.G."/>
            <person name="Cunha C.W."/>
            <person name="Dallagiovanna B."/>
            <person name="Dambros B.P."/>
            <person name="Dellagostin O.A."/>
            <person name="Falcao C."/>
            <person name="Fantinatti-Garboggini F."/>
            <person name="Felipe M.S.S."/>
            <person name="Fiorentin L."/>
            <person name="Franco G.R."/>
            <person name="Freitas N.S.A."/>
            <person name="Frias D."/>
            <person name="Grangeiro T.B."/>
            <person name="Grisard E.C."/>
            <person name="Guimaraes C.T."/>
            <person name="Hungria M."/>
            <person name="Jardim S.N."/>
            <person name="Krieger M.A."/>
            <person name="Laurino J.P."/>
            <person name="Lima L.F.A."/>
            <person name="Lopes M.I."/>
            <person name="Loreto E.L.S."/>
            <person name="Madeira H.M.F."/>
            <person name="Manfio G.P."/>
            <person name="Maranhao A.Q."/>
            <person name="Martinkovics C.T."/>
            <person name="Medeiros S.R.B."/>
            <person name="Moreira M.A.M."/>
            <person name="Neiva M."/>
            <person name="Ramalho-Neto C.E."/>
            <person name="Nicolas M.F."/>
            <person name="Oliveira S.C."/>
            <person name="Paixao R.F.C."/>
            <person name="Pedrosa F.O."/>
            <person name="Pena S.D.J."/>
            <person name="Pereira M."/>
            <person name="Pereira-Ferrari L."/>
            <person name="Piffer I."/>
            <person name="Pinto L.S."/>
            <person name="Potrich D.P."/>
            <person name="Salim A.C.M."/>
            <person name="Santos F.R."/>
            <person name="Schmitt R."/>
            <person name="Schneider M.P.C."/>
            <person name="Schrank A."/>
            <person name="Schrank I.S."/>
            <person name="Schuck A.F."/>
            <person name="Seuanez H.N."/>
            <person name="Silva D.W."/>
            <person name="Silva R."/>
            <person name="Silva S.C."/>
            <person name="Soares C.M.A."/>
            <person name="Souza K.R.L."/>
            <person name="Souza R.C."/>
            <person name="Staats C.C."/>
            <person name="Steffens M.B.R."/>
            <person name="Teixeira S.M.R."/>
            <person name="Urmenyi T.P."/>
            <person name="Vainstein M.H."/>
            <person name="Zuccherato L.W."/>
            <person name="Simpson A.J.G."/>
            <person name="Zaha A."/>
        </authorList>
    </citation>
    <scope>NUCLEOTIDE SEQUENCE [LARGE SCALE GENOMIC DNA]</scope>
    <source>
        <strain>J / ATCC 25934 / NCTC 10110</strain>
    </source>
</reference>
<evidence type="ECO:0000255" key="1">
    <source>
        <dbReference type="HAMAP-Rule" id="MF_01668"/>
    </source>
</evidence>
<accession>Q4AAB0</accession>
<proteinExistence type="inferred from homology"/>
<sequence>MKKEFDFILIGRITIDFNPTDYYNNLENSSLFKKYIGGSAANIAIGLSRLKNKVGFFGSVSDDQFGNFVLNVFENEKIDISRIKKTKDHKLGLTFTEMLSEEKSTILMYRDNVADLQIDVSDIDLDYILRTKILVISGTSLAKSPSREAVLKALFLAKNNGIKVVFDIDYRPYSWKNLDEVSLYYQIVAQNSDLIIGSYEEIQLTSRFCLENPENLIDDDYAKYWLKFVDLIIIKNGKKGSKLYQKDKKLVAKIVPVKMLKGYGGGDAYASLFLDHYLKNESDLENGLALATSAASIMVQSHSSFDLPDYQKILEFKDNALKSDPDLVQKKEWNAFKK</sequence>
<name>IOLC_MESHJ</name>
<keyword id="KW-0067">ATP-binding</keyword>
<keyword id="KW-0418">Kinase</keyword>
<keyword id="KW-0547">Nucleotide-binding</keyword>
<keyword id="KW-0808">Transferase</keyword>
<dbReference type="EC" id="2.7.1.92" evidence="1"/>
<dbReference type="EMBL" id="AE017243">
    <property type="protein sequence ID" value="AAZ44311.1"/>
    <property type="molecule type" value="Genomic_DNA"/>
</dbReference>
<dbReference type="RefSeq" id="WP_011284003.1">
    <property type="nucleotide sequence ID" value="NC_007295.1"/>
</dbReference>
<dbReference type="SMR" id="Q4AAB0"/>
<dbReference type="GeneID" id="41334525"/>
<dbReference type="KEGG" id="mhj:MHJ_0220"/>
<dbReference type="eggNOG" id="COG0524">
    <property type="taxonomic scope" value="Bacteria"/>
</dbReference>
<dbReference type="HOGENOM" id="CLU_027634_6_0_14"/>
<dbReference type="OrthoDB" id="9813569at2"/>
<dbReference type="UniPathway" id="UPA00076">
    <property type="reaction ID" value="UER00146"/>
</dbReference>
<dbReference type="Proteomes" id="UP000000548">
    <property type="component" value="Chromosome"/>
</dbReference>
<dbReference type="GO" id="GO:0047590">
    <property type="term" value="F:5-dehydro-2-deoxygluconokinase activity"/>
    <property type="evidence" value="ECO:0007669"/>
    <property type="project" value="UniProtKB-EC"/>
</dbReference>
<dbReference type="GO" id="GO:0005524">
    <property type="term" value="F:ATP binding"/>
    <property type="evidence" value="ECO:0007669"/>
    <property type="project" value="UniProtKB-KW"/>
</dbReference>
<dbReference type="CDD" id="cd01166">
    <property type="entry name" value="KdgK"/>
    <property type="match status" value="1"/>
</dbReference>
<dbReference type="Gene3D" id="3.40.1190.20">
    <property type="match status" value="1"/>
</dbReference>
<dbReference type="Gene3D" id="2.20.150.10">
    <property type="entry name" value="putative 5-dehydro-2- deoxygluconokinase"/>
    <property type="match status" value="1"/>
</dbReference>
<dbReference type="HAMAP" id="MF_01668">
    <property type="entry name" value="IolC"/>
    <property type="match status" value="1"/>
</dbReference>
<dbReference type="InterPro" id="IPR022841">
    <property type="entry name" value="DKG_kinase_firmi"/>
</dbReference>
<dbReference type="InterPro" id="IPR030830">
    <property type="entry name" value="Myo_inos_IolC"/>
</dbReference>
<dbReference type="InterPro" id="IPR023314">
    <property type="entry name" value="Myo_inos_IolC-like_sf"/>
</dbReference>
<dbReference type="InterPro" id="IPR050306">
    <property type="entry name" value="PfkB_Carbo_kinase"/>
</dbReference>
<dbReference type="InterPro" id="IPR011611">
    <property type="entry name" value="PfkB_dom"/>
</dbReference>
<dbReference type="InterPro" id="IPR029056">
    <property type="entry name" value="Ribokinase-like"/>
</dbReference>
<dbReference type="NCBIfam" id="TIGR04382">
    <property type="entry name" value="myo_inos_iolC_N"/>
    <property type="match status" value="1"/>
</dbReference>
<dbReference type="PANTHER" id="PTHR43085:SF49">
    <property type="entry name" value="5-DEHYDRO-2-DEOXYGLUCONOKINASE"/>
    <property type="match status" value="1"/>
</dbReference>
<dbReference type="PANTHER" id="PTHR43085">
    <property type="entry name" value="HEXOKINASE FAMILY MEMBER"/>
    <property type="match status" value="1"/>
</dbReference>
<dbReference type="Pfam" id="PF00294">
    <property type="entry name" value="PfkB"/>
    <property type="match status" value="1"/>
</dbReference>
<dbReference type="SUPFAM" id="SSF53613">
    <property type="entry name" value="Ribokinase-like"/>
    <property type="match status" value="1"/>
</dbReference>
<comment type="function">
    <text evidence="1">Catalyzes the phosphorylation of 5-dehydro-2-deoxy-D-gluconate (2-deoxy-5-keto-D-gluconate or DKG) to 6-phospho-5-dehydro-2-deoxy-D-gluconate (DKGP).</text>
</comment>
<comment type="catalytic activity">
    <reaction evidence="1">
        <text>5-dehydro-2-deoxy-D-gluconate + ATP = 6-phospho-5-dehydro-2-deoxy-D-gluconate + ADP + H(+)</text>
        <dbReference type="Rhea" id="RHEA:13497"/>
        <dbReference type="ChEBI" id="CHEBI:15378"/>
        <dbReference type="ChEBI" id="CHEBI:16669"/>
        <dbReference type="ChEBI" id="CHEBI:30616"/>
        <dbReference type="ChEBI" id="CHEBI:57949"/>
        <dbReference type="ChEBI" id="CHEBI:456216"/>
        <dbReference type="EC" id="2.7.1.92"/>
    </reaction>
</comment>
<comment type="pathway">
    <text evidence="1">Polyol metabolism; myo-inositol degradation into acetyl-CoA; acetyl-CoA from myo-inositol: step 5/7.</text>
</comment>
<comment type="similarity">
    <text evidence="1">Belongs to the carbohydrate kinase PfkB family.</text>
</comment>
<feature type="chain" id="PRO_0000352307" description="5-dehydro-2-deoxygluconokinase">
    <location>
        <begin position="1"/>
        <end position="338"/>
    </location>
</feature>
<gene>
    <name evidence="1" type="primary">iolC</name>
    <name type="ordered locus">MHJ_0220</name>
</gene>
<organism>
    <name type="scientific">Mesomycoplasma hyopneumoniae (strain J / ATCC 25934 / NCTC 10110)</name>
    <name type="common">Mycoplasma hyopneumoniae</name>
    <dbReference type="NCBI Taxonomy" id="262719"/>
    <lineage>
        <taxon>Bacteria</taxon>
        <taxon>Bacillati</taxon>
        <taxon>Mycoplasmatota</taxon>
        <taxon>Mycoplasmoidales</taxon>
        <taxon>Metamycoplasmataceae</taxon>
        <taxon>Mesomycoplasma</taxon>
    </lineage>
</organism>
<protein>
    <recommendedName>
        <fullName evidence="1">5-dehydro-2-deoxygluconokinase</fullName>
        <ecNumber evidence="1">2.7.1.92</ecNumber>
    </recommendedName>
    <alternativeName>
        <fullName evidence="1">2-deoxy-5-keto-D-gluconate kinase</fullName>
        <shortName evidence="1">DKG kinase</shortName>
    </alternativeName>
</protein>